<dbReference type="EMBL" id="U66305">
    <property type="protein sequence ID" value="AAC49779.1"/>
    <property type="molecule type" value="Genomic_DNA"/>
</dbReference>
<dbReference type="EMBL" id="CU329671">
    <property type="protein sequence ID" value="CAA21260.1"/>
    <property type="molecule type" value="Genomic_DNA"/>
</dbReference>
<dbReference type="PIR" id="T39978">
    <property type="entry name" value="T39978"/>
</dbReference>
<dbReference type="RefSeq" id="NP_001018819.2">
    <property type="nucleotide sequence ID" value="NM_001021982.3"/>
</dbReference>
<dbReference type="SMR" id="P78966"/>
<dbReference type="BioGRID" id="276933">
    <property type="interactions" value="1"/>
</dbReference>
<dbReference type="FunCoup" id="P78966">
    <property type="interactions" value="33"/>
</dbReference>
<dbReference type="STRING" id="284812.P78966"/>
<dbReference type="TCDB" id="3.A.1.206.2">
    <property type="family name" value="the atp-binding cassette (abc) superfamily"/>
</dbReference>
<dbReference type="GlyCosmos" id="P78966">
    <property type="glycosylation" value="10 sites, No reported glycans"/>
</dbReference>
<dbReference type="PaxDb" id="4896-SPBC25B2.02c.1"/>
<dbReference type="EnsemblFungi" id="SPBC25B2.02c.1">
    <property type="protein sequence ID" value="SPBC25B2.02c.1:pep"/>
    <property type="gene ID" value="SPBC25B2.02c"/>
</dbReference>
<dbReference type="GeneID" id="2540405"/>
<dbReference type="KEGG" id="spo:2540405"/>
<dbReference type="PomBase" id="SPBC25B2.02c">
    <property type="gene designation" value="mam1"/>
</dbReference>
<dbReference type="VEuPathDB" id="FungiDB:SPBC25B2.02c"/>
<dbReference type="eggNOG" id="KOG0055">
    <property type="taxonomic scope" value="Eukaryota"/>
</dbReference>
<dbReference type="HOGENOM" id="CLU_000604_17_8_1"/>
<dbReference type="InParanoid" id="P78966"/>
<dbReference type="OMA" id="TFWACLT"/>
<dbReference type="PhylomeDB" id="P78966"/>
<dbReference type="Reactome" id="R-SPO-382556">
    <property type="pathway name" value="ABC-family proteins mediated transport"/>
</dbReference>
<dbReference type="Reactome" id="R-SPO-983170">
    <property type="pathway name" value="Antigen Presentation: Folding, assembly and peptide loading of class I MHC"/>
</dbReference>
<dbReference type="PRO" id="PR:P78966"/>
<dbReference type="Proteomes" id="UP000002485">
    <property type="component" value="Chromosome II"/>
</dbReference>
<dbReference type="GO" id="GO:0032153">
    <property type="term" value="C:cell division site"/>
    <property type="evidence" value="ECO:0007005"/>
    <property type="project" value="PomBase"/>
</dbReference>
<dbReference type="GO" id="GO:0051286">
    <property type="term" value="C:cell tip"/>
    <property type="evidence" value="ECO:0007005"/>
    <property type="project" value="PomBase"/>
</dbReference>
<dbReference type="GO" id="GO:0090726">
    <property type="term" value="C:cortical dynamic polarity patch"/>
    <property type="evidence" value="ECO:0000314"/>
    <property type="project" value="PomBase"/>
</dbReference>
<dbReference type="GO" id="GO:0005737">
    <property type="term" value="C:cytoplasm"/>
    <property type="evidence" value="ECO:0000314"/>
    <property type="project" value="PomBase"/>
</dbReference>
<dbReference type="GO" id="GO:0016020">
    <property type="term" value="C:membrane"/>
    <property type="evidence" value="ECO:0000318"/>
    <property type="project" value="GO_Central"/>
</dbReference>
<dbReference type="GO" id="GO:0015421">
    <property type="term" value="F:ABC-type oligopeptide transporter activity"/>
    <property type="evidence" value="ECO:0000315"/>
    <property type="project" value="PomBase"/>
</dbReference>
<dbReference type="GO" id="GO:0005524">
    <property type="term" value="F:ATP binding"/>
    <property type="evidence" value="ECO:0007669"/>
    <property type="project" value="UniProtKB-KW"/>
</dbReference>
<dbReference type="GO" id="GO:0016887">
    <property type="term" value="F:ATP hydrolysis activity"/>
    <property type="evidence" value="ECO:0007669"/>
    <property type="project" value="InterPro"/>
</dbReference>
<dbReference type="GO" id="GO:0042626">
    <property type="term" value="F:ATPase-coupled transmembrane transporter activity"/>
    <property type="evidence" value="ECO:0000318"/>
    <property type="project" value="GO_Central"/>
</dbReference>
<dbReference type="GO" id="GO:0000747">
    <property type="term" value="P:conjugation with cellular fusion"/>
    <property type="evidence" value="ECO:0000315"/>
    <property type="project" value="PomBase"/>
</dbReference>
<dbReference type="GO" id="GO:0090539">
    <property type="term" value="P:peptide pheromone export by transmembrane transport"/>
    <property type="evidence" value="ECO:0000315"/>
    <property type="project" value="PomBase"/>
</dbReference>
<dbReference type="GO" id="GO:0019236">
    <property type="term" value="P:response to pheromone"/>
    <property type="evidence" value="ECO:0007669"/>
    <property type="project" value="UniProtKB-KW"/>
</dbReference>
<dbReference type="GO" id="GO:0055085">
    <property type="term" value="P:transmembrane transport"/>
    <property type="evidence" value="ECO:0000318"/>
    <property type="project" value="GO_Central"/>
</dbReference>
<dbReference type="CDD" id="cd18577">
    <property type="entry name" value="ABC_6TM_Pgp_ABCB1_D1_like"/>
    <property type="match status" value="1"/>
</dbReference>
<dbReference type="CDD" id="cd18578">
    <property type="entry name" value="ABC_6TM_Pgp_ABCB1_D2_like"/>
    <property type="match status" value="1"/>
</dbReference>
<dbReference type="CDD" id="cd03228">
    <property type="entry name" value="ABCC_MRP_Like"/>
    <property type="match status" value="1"/>
</dbReference>
<dbReference type="FunFam" id="3.40.50.300:FF:000604">
    <property type="entry name" value="ABC transporter B family member 28"/>
    <property type="match status" value="2"/>
</dbReference>
<dbReference type="Gene3D" id="1.20.1560.10">
    <property type="entry name" value="ABC transporter type 1, transmembrane domain"/>
    <property type="match status" value="1"/>
</dbReference>
<dbReference type="Gene3D" id="3.40.50.300">
    <property type="entry name" value="P-loop containing nucleotide triphosphate hydrolases"/>
    <property type="match status" value="2"/>
</dbReference>
<dbReference type="InterPro" id="IPR003593">
    <property type="entry name" value="AAA+_ATPase"/>
</dbReference>
<dbReference type="InterPro" id="IPR011527">
    <property type="entry name" value="ABC1_TM_dom"/>
</dbReference>
<dbReference type="InterPro" id="IPR036640">
    <property type="entry name" value="ABC1_TM_sf"/>
</dbReference>
<dbReference type="InterPro" id="IPR003439">
    <property type="entry name" value="ABC_transporter-like_ATP-bd"/>
</dbReference>
<dbReference type="InterPro" id="IPR017871">
    <property type="entry name" value="ABC_transporter-like_CS"/>
</dbReference>
<dbReference type="InterPro" id="IPR027417">
    <property type="entry name" value="P-loop_NTPase"/>
</dbReference>
<dbReference type="InterPro" id="IPR039421">
    <property type="entry name" value="Type_1_exporter"/>
</dbReference>
<dbReference type="PANTHER" id="PTHR43394:SF15">
    <property type="entry name" value="ALPHA-FACTOR-TRANSPORTING ATPASE"/>
    <property type="match status" value="1"/>
</dbReference>
<dbReference type="PANTHER" id="PTHR43394">
    <property type="entry name" value="ATP-DEPENDENT PERMEASE MDL1, MITOCHONDRIAL"/>
    <property type="match status" value="1"/>
</dbReference>
<dbReference type="Pfam" id="PF00664">
    <property type="entry name" value="ABC_membrane"/>
    <property type="match status" value="2"/>
</dbReference>
<dbReference type="Pfam" id="PF00005">
    <property type="entry name" value="ABC_tran"/>
    <property type="match status" value="2"/>
</dbReference>
<dbReference type="SMART" id="SM00382">
    <property type="entry name" value="AAA"/>
    <property type="match status" value="2"/>
</dbReference>
<dbReference type="SUPFAM" id="SSF90123">
    <property type="entry name" value="ABC transporter transmembrane region"/>
    <property type="match status" value="2"/>
</dbReference>
<dbReference type="SUPFAM" id="SSF52540">
    <property type="entry name" value="P-loop containing nucleoside triphosphate hydrolases"/>
    <property type="match status" value="2"/>
</dbReference>
<dbReference type="PROSITE" id="PS50929">
    <property type="entry name" value="ABC_TM1F"/>
    <property type="match status" value="2"/>
</dbReference>
<dbReference type="PROSITE" id="PS00211">
    <property type="entry name" value="ABC_TRANSPORTER_1"/>
    <property type="match status" value="2"/>
</dbReference>
<dbReference type="PROSITE" id="PS50893">
    <property type="entry name" value="ABC_TRANSPORTER_2"/>
    <property type="match status" value="2"/>
</dbReference>
<keyword id="KW-0067">ATP-binding</keyword>
<keyword id="KW-0325">Glycoprotein</keyword>
<keyword id="KW-0472">Membrane</keyword>
<keyword id="KW-0547">Nucleotide-binding</keyword>
<keyword id="KW-0589">Pheromone response</keyword>
<keyword id="KW-1185">Reference proteome</keyword>
<keyword id="KW-0677">Repeat</keyword>
<keyword id="KW-0812">Transmembrane</keyword>
<keyword id="KW-1133">Transmembrane helix</keyword>
<keyword id="KW-0813">Transport</keyword>
<protein>
    <recommendedName>
        <fullName>Mating factor M secretion protein mam1</fullName>
    </recommendedName>
    <alternativeName>
        <fullName>Multiple drug resistance protein homolog</fullName>
    </alternativeName>
    <alternativeName>
        <fullName>P-glycoprotein</fullName>
    </alternativeName>
</protein>
<proteinExistence type="inferred from homology"/>
<comment type="function">
    <text>Required in S.pombe M (minus) cells for production of M-factor pheromone. Involved in the transport of the farnesyl-derivation of the M-factor pheromone.</text>
</comment>
<comment type="subcellular location">
    <subcellularLocation>
        <location>Membrane</location>
        <topology>Multi-pass membrane protein</topology>
    </subcellularLocation>
</comment>
<comment type="similarity">
    <text evidence="5">Belongs to the ABC transporter superfamily. Alpha-factor sex pheromone exporter (TC 3.A.1.206) family.</text>
</comment>
<accession>P78966</accession>
<organism>
    <name type="scientific">Schizosaccharomyces pombe (strain 972 / ATCC 24843)</name>
    <name type="common">Fission yeast</name>
    <dbReference type="NCBI Taxonomy" id="284812"/>
    <lineage>
        <taxon>Eukaryota</taxon>
        <taxon>Fungi</taxon>
        <taxon>Dikarya</taxon>
        <taxon>Ascomycota</taxon>
        <taxon>Taphrinomycotina</taxon>
        <taxon>Schizosaccharomycetes</taxon>
        <taxon>Schizosaccharomycetales</taxon>
        <taxon>Schizosaccharomycetaceae</taxon>
        <taxon>Schizosaccharomyces</taxon>
    </lineage>
</organism>
<feature type="chain" id="PRO_0000093369" description="Mating factor M secretion protein mam1">
    <location>
        <begin position="1"/>
        <end position="1336"/>
    </location>
</feature>
<feature type="topological domain" description="Cytoplasmic" evidence="1">
    <location>
        <begin position="1"/>
        <end position="91"/>
    </location>
</feature>
<feature type="transmembrane region" description="Helical" evidence="3">
    <location>
        <begin position="92"/>
        <end position="112"/>
    </location>
</feature>
<feature type="topological domain" description="Extracellular" evidence="1">
    <location>
        <begin position="113"/>
        <end position="153"/>
    </location>
</feature>
<feature type="transmembrane region" description="Helical" evidence="3">
    <location>
        <begin position="154"/>
        <end position="174"/>
    </location>
</feature>
<feature type="topological domain" description="Cytoplasmic" evidence="1">
    <location>
        <begin position="175"/>
        <end position="250"/>
    </location>
</feature>
<feature type="transmembrane region" description="Helical" evidence="3">
    <location>
        <begin position="251"/>
        <end position="271"/>
    </location>
</feature>
<feature type="topological domain" description="Extracellular" evidence="1">
    <location>
        <begin position="272"/>
        <end position="778"/>
    </location>
</feature>
<feature type="transmembrane region" description="Helical" evidence="3">
    <location>
        <begin position="779"/>
        <end position="799"/>
    </location>
</feature>
<feature type="topological domain" description="Cytoplasmic" evidence="1">
    <location>
        <begin position="800"/>
        <end position="897"/>
    </location>
</feature>
<feature type="transmembrane region" description="Helical" evidence="3">
    <location>
        <begin position="898"/>
        <end position="918"/>
    </location>
</feature>
<feature type="topological domain" description="Extracellular" evidence="1">
    <location>
        <begin position="919"/>
        <end position="1336"/>
    </location>
</feature>
<feature type="domain" description="ABC transmembrane type-1 1" evidence="3">
    <location>
        <begin position="104"/>
        <end position="396"/>
    </location>
</feature>
<feature type="domain" description="ABC transporter 1" evidence="2">
    <location>
        <begin position="433"/>
        <end position="668"/>
    </location>
</feature>
<feature type="domain" description="ABC transmembrane type-1 2" evidence="3">
    <location>
        <begin position="781"/>
        <end position="1066"/>
    </location>
</feature>
<feature type="domain" description="ABC transporter 2" evidence="2">
    <location>
        <begin position="1099"/>
        <end position="1331"/>
    </location>
</feature>
<feature type="region of interest" description="Disordered" evidence="4">
    <location>
        <begin position="1"/>
        <end position="29"/>
    </location>
</feature>
<feature type="binding site" evidence="2">
    <location>
        <begin position="469"/>
        <end position="476"/>
    </location>
    <ligand>
        <name>ATP</name>
        <dbReference type="ChEBI" id="CHEBI:30616"/>
        <label>1</label>
    </ligand>
</feature>
<feature type="binding site" evidence="2">
    <location>
        <begin position="1135"/>
        <end position="1142"/>
    </location>
    <ligand>
        <name>ATP</name>
        <dbReference type="ChEBI" id="CHEBI:30616"/>
        <label>2</label>
    </ligand>
</feature>
<feature type="glycosylation site" description="N-linked (GlcNAc...) asparagine" evidence="1">
    <location>
        <position position="437"/>
    </location>
</feature>
<feature type="glycosylation site" description="N-linked (GlcNAc...) asparagine" evidence="1">
    <location>
        <position position="454"/>
    </location>
</feature>
<feature type="glycosylation site" description="N-linked (GlcNAc...) asparagine" evidence="1">
    <location>
        <position position="536"/>
    </location>
</feature>
<feature type="glycosylation site" description="N-linked (GlcNAc...) asparagine" evidence="1">
    <location>
        <position position="664"/>
    </location>
</feature>
<feature type="glycosylation site" description="N-linked (GlcNAc...) asparagine" evidence="1">
    <location>
        <position position="697"/>
    </location>
</feature>
<feature type="glycosylation site" description="N-linked (GlcNAc...) asparagine" evidence="1">
    <location>
        <position position="1011"/>
    </location>
</feature>
<feature type="glycosylation site" description="N-linked (GlcNAc...) asparagine" evidence="1">
    <location>
        <position position="1063"/>
    </location>
</feature>
<feature type="glycosylation site" description="N-linked (GlcNAc...) asparagine" evidence="1">
    <location>
        <position position="1120"/>
    </location>
</feature>
<feature type="glycosylation site" description="N-linked (GlcNAc...) asparagine" evidence="1">
    <location>
        <position position="1235"/>
    </location>
</feature>
<feature type="glycosylation site" description="N-linked (GlcNAc...) asparagine" evidence="1">
    <location>
        <position position="1280"/>
    </location>
</feature>
<gene>
    <name type="primary">mam1</name>
    <name type="ORF">SPBC25B2.02c</name>
    <name type="ORF">SPBC2G5.09c</name>
</gene>
<evidence type="ECO:0000255" key="1"/>
<evidence type="ECO:0000255" key="2">
    <source>
        <dbReference type="PROSITE-ProRule" id="PRU00434"/>
    </source>
</evidence>
<evidence type="ECO:0000255" key="3">
    <source>
        <dbReference type="PROSITE-ProRule" id="PRU00441"/>
    </source>
</evidence>
<evidence type="ECO:0000256" key="4">
    <source>
        <dbReference type="SAM" id="MobiDB-lite"/>
    </source>
</evidence>
<evidence type="ECO:0000305" key="5"/>
<reference key="1">
    <citation type="journal article" date="1997" name="Mol. Gen. Genet.">
        <title>The Schizosaccharomyces pombe mam1 gene encodes an ABC transporter mediating secretion of M-factor.</title>
        <authorList>
            <person name="Christensen P.U."/>
            <person name="Davey J."/>
            <person name="Nielsen O."/>
        </authorList>
    </citation>
    <scope>NUCLEOTIDE SEQUENCE [GENOMIC DNA]</scope>
</reference>
<reference key="2">
    <citation type="journal article" date="2002" name="Nature">
        <title>The genome sequence of Schizosaccharomyces pombe.</title>
        <authorList>
            <person name="Wood V."/>
            <person name="Gwilliam R."/>
            <person name="Rajandream M.A."/>
            <person name="Lyne M.H."/>
            <person name="Lyne R."/>
            <person name="Stewart A."/>
            <person name="Sgouros J.G."/>
            <person name="Peat N."/>
            <person name="Hayles J."/>
            <person name="Baker S.G."/>
            <person name="Basham D."/>
            <person name="Bowman S."/>
            <person name="Brooks K."/>
            <person name="Brown D."/>
            <person name="Brown S."/>
            <person name="Chillingworth T."/>
            <person name="Churcher C.M."/>
            <person name="Collins M."/>
            <person name="Connor R."/>
            <person name="Cronin A."/>
            <person name="Davis P."/>
            <person name="Feltwell T."/>
            <person name="Fraser A."/>
            <person name="Gentles S."/>
            <person name="Goble A."/>
            <person name="Hamlin N."/>
            <person name="Harris D.E."/>
            <person name="Hidalgo J."/>
            <person name="Hodgson G."/>
            <person name="Holroyd S."/>
            <person name="Hornsby T."/>
            <person name="Howarth S."/>
            <person name="Huckle E.J."/>
            <person name="Hunt S."/>
            <person name="Jagels K."/>
            <person name="James K.D."/>
            <person name="Jones L."/>
            <person name="Jones M."/>
            <person name="Leather S."/>
            <person name="McDonald S."/>
            <person name="McLean J."/>
            <person name="Mooney P."/>
            <person name="Moule S."/>
            <person name="Mungall K.L."/>
            <person name="Murphy L.D."/>
            <person name="Niblett D."/>
            <person name="Odell C."/>
            <person name="Oliver K."/>
            <person name="O'Neil S."/>
            <person name="Pearson D."/>
            <person name="Quail M.A."/>
            <person name="Rabbinowitsch E."/>
            <person name="Rutherford K.M."/>
            <person name="Rutter S."/>
            <person name="Saunders D."/>
            <person name="Seeger K."/>
            <person name="Sharp S."/>
            <person name="Skelton J."/>
            <person name="Simmonds M.N."/>
            <person name="Squares R."/>
            <person name="Squares S."/>
            <person name="Stevens K."/>
            <person name="Taylor K."/>
            <person name="Taylor R.G."/>
            <person name="Tivey A."/>
            <person name="Walsh S.V."/>
            <person name="Warren T."/>
            <person name="Whitehead S."/>
            <person name="Woodward J.R."/>
            <person name="Volckaert G."/>
            <person name="Aert R."/>
            <person name="Robben J."/>
            <person name="Grymonprez B."/>
            <person name="Weltjens I."/>
            <person name="Vanstreels E."/>
            <person name="Rieger M."/>
            <person name="Schaefer M."/>
            <person name="Mueller-Auer S."/>
            <person name="Gabel C."/>
            <person name="Fuchs M."/>
            <person name="Duesterhoeft A."/>
            <person name="Fritzc C."/>
            <person name="Holzer E."/>
            <person name="Moestl D."/>
            <person name="Hilbert H."/>
            <person name="Borzym K."/>
            <person name="Langer I."/>
            <person name="Beck A."/>
            <person name="Lehrach H."/>
            <person name="Reinhardt R."/>
            <person name="Pohl T.M."/>
            <person name="Eger P."/>
            <person name="Zimmermann W."/>
            <person name="Wedler H."/>
            <person name="Wambutt R."/>
            <person name="Purnelle B."/>
            <person name="Goffeau A."/>
            <person name="Cadieu E."/>
            <person name="Dreano S."/>
            <person name="Gloux S."/>
            <person name="Lelaure V."/>
            <person name="Mottier S."/>
            <person name="Galibert F."/>
            <person name="Aves S.J."/>
            <person name="Xiang Z."/>
            <person name="Hunt C."/>
            <person name="Moore K."/>
            <person name="Hurst S.M."/>
            <person name="Lucas M."/>
            <person name="Rochet M."/>
            <person name="Gaillardin C."/>
            <person name="Tallada V.A."/>
            <person name="Garzon A."/>
            <person name="Thode G."/>
            <person name="Daga R.R."/>
            <person name="Cruzado L."/>
            <person name="Jimenez J."/>
            <person name="Sanchez M."/>
            <person name="del Rey F."/>
            <person name="Benito J."/>
            <person name="Dominguez A."/>
            <person name="Revuelta J.L."/>
            <person name="Moreno S."/>
            <person name="Armstrong J."/>
            <person name="Forsburg S.L."/>
            <person name="Cerutti L."/>
            <person name="Lowe T."/>
            <person name="McCombie W.R."/>
            <person name="Paulsen I."/>
            <person name="Potashkin J."/>
            <person name="Shpakovski G.V."/>
            <person name="Ussery D."/>
            <person name="Barrell B.G."/>
            <person name="Nurse P."/>
        </authorList>
    </citation>
    <scope>NUCLEOTIDE SEQUENCE [LARGE SCALE GENOMIC DNA]</scope>
    <source>
        <strain>972 / ATCC 24843</strain>
    </source>
</reference>
<name>MAM1_SCHPO</name>
<sequence>MHIHSDLSLPQFEHASIDPPSYSPQKSSFEEKKHNFSITNKSLETLRSQESPCSTTFPVSDRKDALLNIPTVVDDEFQHTEELAGVSSWSDFFYLFHFSDIPLIFGTLIFTCLSAALEPLMTWTTGKVFDALSQYATSQITLGKMISLINFNSLLITIFGLASCVFSFGVRFLWQYLSAIAGKRARSLCFHVLSSKSSTFYSLTESKSGLVNSVDRCIQFYEKSISLPMFHIAENLAISLSCLIISFRYSWSLTLVVLASYPIIILVVGFINSFLSSAYEKDRKSSEKAASILEKSISAIQTVIFHSMQDTEYRYFADACSTSSKSFLRFSFLDAFQGGVSQFFLYSVFFQGLWFGNHLATTKRVNVGQVVTVFGSCLSVASSLQQILPAIPDLIKGKFSSHFIKTLCESHDPIEAAKRSAAKIKSISFERGFRFDNVSFAYPSRDENLFSLINVSVFIPFGELVHIIGPSGSGKSTFISLLLRYFSPTYGNIYLDDFPLEEIDEHVLGSTITLVCQQPVIFDMTIRENIIMRNENASESDFEEVCRLALVDEFALTFDQSYDTPCKEASLSGGQQQRIALARALLRDTEILILDEPTSALDPITKNLVMDAIRAHRKGKTTLVITHDMSQINNDELVLVIDKGHLIQRCARKELVLFEDFENNVSIDEKVLKEEADNPFILPNEESLLEKYWINYNESFSQLSRESLFTSLESPFTDIESPTIVSRRKIVEQRKLRMEKESFQETNVDQTFHLFDDKEHACSLTLIFKSIWKVKKLRWFFLLGLLTSLIQGASVPIFAYVISKCLNLFMQIDPSIGVAFWSSMVLVVAAGSGASYFFSHYIFSISAKIWCDHYRLLAVKVLFTQDQAWFDQIENYPLVLSKILVNNISDMRNMISSLIEEVFIAFTMAIIGIAWSFATGWRLAAVLVAVSPILCLTSRMFSYIYVSTERMCQDVVISTTSILHKTIVNLDTIKGYSVLSFFRENHKNSLRKSWEAFKRRAFWTSLGFAINNSLLYFVRALLFYCSSIFISKEFYTVEQMVQVLSLATFTLLMASTCIMSLPNVSASRIATSRVLKLSSLKPGNLHKSGYLKFPLVGKIEFDGVSFAYPDSERNHLALNNVSLSIEAREKVAIVGISGSGKSTLVELLRKTYPSEDIYIDGYPLTNIDTNWLLKKVAIVDQKPHLLGSTILESLLYGVDRDINSVMDALDKTYMTEVIQNLPNGLDTPLLEFSKNFSGGQIQRLAFARALLRNPRLLILDECTSALDSKSSLLLEKTIQNLSCTVLIITHQPSLMKLADRIIVMDSGIVKESGSFDELMNRHTHFWKLIHRGEWIE</sequence>